<sequence length="91" mass="10121">MSEPDVKSHKIEFPCDDYPIKVIGDTVVGFKDTVIEILSKHAKVDLSTLAERQSKEGKYTTVQLHIVAESENQLHDINSALRATGIVKMVL</sequence>
<name>Y4855_PSEPG</name>
<protein>
    <recommendedName>
        <fullName evidence="1">UPF0250 protein PputGB1_4855</fullName>
    </recommendedName>
</protein>
<gene>
    <name type="ordered locus">PputGB1_4855</name>
</gene>
<accession>B0KJX6</accession>
<feature type="chain" id="PRO_1000082826" description="UPF0250 protein PputGB1_4855">
    <location>
        <begin position="1"/>
        <end position="91"/>
    </location>
</feature>
<comment type="similarity">
    <text evidence="1">Belongs to the UPF0250 family.</text>
</comment>
<reference key="1">
    <citation type="submission" date="2008-01" db="EMBL/GenBank/DDBJ databases">
        <title>Complete sequence of Pseudomonas putida GB-1.</title>
        <authorList>
            <consortium name="US DOE Joint Genome Institute"/>
            <person name="Copeland A."/>
            <person name="Lucas S."/>
            <person name="Lapidus A."/>
            <person name="Barry K."/>
            <person name="Glavina del Rio T."/>
            <person name="Dalin E."/>
            <person name="Tice H."/>
            <person name="Pitluck S."/>
            <person name="Bruce D."/>
            <person name="Goodwin L."/>
            <person name="Chertkov O."/>
            <person name="Brettin T."/>
            <person name="Detter J.C."/>
            <person name="Han C."/>
            <person name="Kuske C.R."/>
            <person name="Schmutz J."/>
            <person name="Larimer F."/>
            <person name="Land M."/>
            <person name="Hauser L."/>
            <person name="Kyrpides N."/>
            <person name="Kim E."/>
            <person name="McCarthy J.K."/>
            <person name="Richardson P."/>
        </authorList>
    </citation>
    <scope>NUCLEOTIDE SEQUENCE [LARGE SCALE GENOMIC DNA]</scope>
    <source>
        <strain>GB-1</strain>
    </source>
</reference>
<evidence type="ECO:0000255" key="1">
    <source>
        <dbReference type="HAMAP-Rule" id="MF_00659"/>
    </source>
</evidence>
<organism>
    <name type="scientific">Pseudomonas putida (strain GB-1)</name>
    <dbReference type="NCBI Taxonomy" id="76869"/>
    <lineage>
        <taxon>Bacteria</taxon>
        <taxon>Pseudomonadati</taxon>
        <taxon>Pseudomonadota</taxon>
        <taxon>Gammaproteobacteria</taxon>
        <taxon>Pseudomonadales</taxon>
        <taxon>Pseudomonadaceae</taxon>
        <taxon>Pseudomonas</taxon>
    </lineage>
</organism>
<dbReference type="EMBL" id="CP000926">
    <property type="protein sequence ID" value="ABZ00740.1"/>
    <property type="molecule type" value="Genomic_DNA"/>
</dbReference>
<dbReference type="RefSeq" id="WP_003249736.1">
    <property type="nucleotide sequence ID" value="NC_010322.1"/>
</dbReference>
<dbReference type="SMR" id="B0KJX6"/>
<dbReference type="KEGG" id="ppg:PputGB1_4855"/>
<dbReference type="eggNOG" id="COG2921">
    <property type="taxonomic scope" value="Bacteria"/>
</dbReference>
<dbReference type="HOGENOM" id="CLU_161438_1_0_6"/>
<dbReference type="Proteomes" id="UP000002157">
    <property type="component" value="Chromosome"/>
</dbReference>
<dbReference type="GO" id="GO:0005829">
    <property type="term" value="C:cytosol"/>
    <property type="evidence" value="ECO:0007669"/>
    <property type="project" value="TreeGrafter"/>
</dbReference>
<dbReference type="Gene3D" id="3.30.70.260">
    <property type="match status" value="1"/>
</dbReference>
<dbReference type="HAMAP" id="MF_00659">
    <property type="entry name" value="UPF0250"/>
    <property type="match status" value="1"/>
</dbReference>
<dbReference type="InterPro" id="IPR007454">
    <property type="entry name" value="UPF0250_YbeD-like"/>
</dbReference>
<dbReference type="InterPro" id="IPR027471">
    <property type="entry name" value="YbeD-like_sf"/>
</dbReference>
<dbReference type="NCBIfam" id="NF001486">
    <property type="entry name" value="PRK00341.1"/>
    <property type="match status" value="1"/>
</dbReference>
<dbReference type="PANTHER" id="PTHR38036">
    <property type="entry name" value="UPF0250 PROTEIN YBED"/>
    <property type="match status" value="1"/>
</dbReference>
<dbReference type="PANTHER" id="PTHR38036:SF1">
    <property type="entry name" value="UPF0250 PROTEIN YBED"/>
    <property type="match status" value="1"/>
</dbReference>
<dbReference type="Pfam" id="PF04359">
    <property type="entry name" value="DUF493"/>
    <property type="match status" value="1"/>
</dbReference>
<dbReference type="SUPFAM" id="SSF117991">
    <property type="entry name" value="YbeD/HP0495-like"/>
    <property type="match status" value="1"/>
</dbReference>
<proteinExistence type="inferred from homology"/>